<name>MPK16_ORYSJ</name>
<proteinExistence type="evidence at transcript level"/>
<reference key="1">
    <citation type="journal article" date="2002" name="Nature">
        <title>The genome sequence and structure of rice chromosome 1.</title>
        <authorList>
            <person name="Sasaki T."/>
            <person name="Matsumoto T."/>
            <person name="Yamamoto K."/>
            <person name="Sakata K."/>
            <person name="Baba T."/>
            <person name="Katayose Y."/>
            <person name="Wu J."/>
            <person name="Niimura Y."/>
            <person name="Cheng Z."/>
            <person name="Nagamura Y."/>
            <person name="Antonio B.A."/>
            <person name="Kanamori H."/>
            <person name="Hosokawa S."/>
            <person name="Masukawa M."/>
            <person name="Arikawa K."/>
            <person name="Chiden Y."/>
            <person name="Hayashi M."/>
            <person name="Okamoto M."/>
            <person name="Ando T."/>
            <person name="Aoki H."/>
            <person name="Arita K."/>
            <person name="Hamada M."/>
            <person name="Harada C."/>
            <person name="Hijishita S."/>
            <person name="Honda M."/>
            <person name="Ichikawa Y."/>
            <person name="Idonuma A."/>
            <person name="Iijima M."/>
            <person name="Ikeda M."/>
            <person name="Ikeno M."/>
            <person name="Ito S."/>
            <person name="Ito T."/>
            <person name="Ito Y."/>
            <person name="Ito Y."/>
            <person name="Iwabuchi A."/>
            <person name="Kamiya K."/>
            <person name="Karasawa W."/>
            <person name="Katagiri S."/>
            <person name="Kikuta A."/>
            <person name="Kobayashi N."/>
            <person name="Kono I."/>
            <person name="Machita K."/>
            <person name="Maehara T."/>
            <person name="Mizuno H."/>
            <person name="Mizubayashi T."/>
            <person name="Mukai Y."/>
            <person name="Nagasaki H."/>
            <person name="Nakashima M."/>
            <person name="Nakama Y."/>
            <person name="Nakamichi Y."/>
            <person name="Nakamura M."/>
            <person name="Namiki N."/>
            <person name="Negishi M."/>
            <person name="Ohta I."/>
            <person name="Ono N."/>
            <person name="Saji S."/>
            <person name="Sakai K."/>
            <person name="Shibata M."/>
            <person name="Shimokawa T."/>
            <person name="Shomura A."/>
            <person name="Song J."/>
            <person name="Takazaki Y."/>
            <person name="Terasawa K."/>
            <person name="Tsuji K."/>
            <person name="Waki K."/>
            <person name="Yamagata H."/>
            <person name="Yamane H."/>
            <person name="Yoshiki S."/>
            <person name="Yoshihara R."/>
            <person name="Yukawa K."/>
            <person name="Zhong H."/>
            <person name="Iwama H."/>
            <person name="Endo T."/>
            <person name="Ito H."/>
            <person name="Hahn J.H."/>
            <person name="Kim H.-I."/>
            <person name="Eun M.-Y."/>
            <person name="Yano M."/>
            <person name="Jiang J."/>
            <person name="Gojobori T."/>
        </authorList>
    </citation>
    <scope>NUCLEOTIDE SEQUENCE [LARGE SCALE GENOMIC DNA]</scope>
    <source>
        <strain>cv. Nipponbare</strain>
    </source>
</reference>
<reference key="2">
    <citation type="journal article" date="2005" name="Nature">
        <title>The map-based sequence of the rice genome.</title>
        <authorList>
            <consortium name="International rice genome sequencing project (IRGSP)"/>
        </authorList>
    </citation>
    <scope>NUCLEOTIDE SEQUENCE [LARGE SCALE GENOMIC DNA]</scope>
    <source>
        <strain>cv. Nipponbare</strain>
    </source>
</reference>
<reference key="3">
    <citation type="journal article" date="2008" name="Nucleic Acids Res.">
        <title>The rice annotation project database (RAP-DB): 2008 update.</title>
        <authorList>
            <consortium name="The rice annotation project (RAP)"/>
        </authorList>
    </citation>
    <scope>GENOME REANNOTATION</scope>
    <source>
        <strain>cv. Nipponbare</strain>
    </source>
</reference>
<reference key="4">
    <citation type="journal article" date="2013" name="Rice">
        <title>Improvement of the Oryza sativa Nipponbare reference genome using next generation sequence and optical map data.</title>
        <authorList>
            <person name="Kawahara Y."/>
            <person name="de la Bastide M."/>
            <person name="Hamilton J.P."/>
            <person name="Kanamori H."/>
            <person name="McCombie W.R."/>
            <person name="Ouyang S."/>
            <person name="Schwartz D.C."/>
            <person name="Tanaka T."/>
            <person name="Wu J."/>
            <person name="Zhou S."/>
            <person name="Childs K.L."/>
            <person name="Davidson R.M."/>
            <person name="Lin H."/>
            <person name="Quesada-Ocampo L."/>
            <person name="Vaillancourt B."/>
            <person name="Sakai H."/>
            <person name="Lee S.S."/>
            <person name="Kim J."/>
            <person name="Numa H."/>
            <person name="Itoh T."/>
            <person name="Buell C.R."/>
            <person name="Matsumoto T."/>
        </authorList>
    </citation>
    <scope>GENOME REANNOTATION</scope>
    <source>
        <strain>cv. Nipponbare</strain>
    </source>
</reference>
<reference key="5">
    <citation type="journal article" date="2003" name="Science">
        <title>Collection, mapping, and annotation of over 28,000 cDNA clones from japonica rice.</title>
        <authorList>
            <consortium name="The rice full-length cDNA consortium"/>
        </authorList>
    </citation>
    <scope>NUCLEOTIDE SEQUENCE [LARGE SCALE MRNA]</scope>
    <source>
        <strain>cv. Nipponbare</strain>
    </source>
</reference>
<reference key="6">
    <citation type="journal article" date="2006" name="Mol. Plant Microbe Interact.">
        <title>Molecular analysis of the rice MAP kinase gene family in relation to Magnaporthe grisea infection.</title>
        <authorList>
            <person name="Reyna N.S."/>
            <person name="Yang Y."/>
        </authorList>
    </citation>
    <scope>NOMENCLATURE</scope>
</reference>
<keyword id="KW-0067">ATP-binding</keyword>
<keyword id="KW-0418">Kinase</keyword>
<keyword id="KW-0547">Nucleotide-binding</keyword>
<keyword id="KW-0597">Phosphoprotein</keyword>
<keyword id="KW-1185">Reference proteome</keyword>
<keyword id="KW-0723">Serine/threonine-protein kinase</keyword>
<keyword id="KW-0808">Transferase</keyword>
<feature type="chain" id="PRO_0000239759" description="Mitogen-activated protein kinase 16">
    <location>
        <begin position="1"/>
        <end position="501"/>
    </location>
</feature>
<feature type="domain" description="Protein kinase" evidence="2">
    <location>
        <begin position="22"/>
        <end position="313"/>
    </location>
</feature>
<feature type="region of interest" description="Disordered" evidence="3">
    <location>
        <begin position="477"/>
        <end position="501"/>
    </location>
</feature>
<feature type="short sequence motif" description="TXY">
    <location>
        <begin position="184"/>
        <end position="186"/>
    </location>
</feature>
<feature type="active site" description="Proton acceptor" evidence="2">
    <location>
        <position position="148"/>
    </location>
</feature>
<feature type="binding site" evidence="2">
    <location>
        <begin position="28"/>
        <end position="36"/>
    </location>
    <ligand>
        <name>ATP</name>
        <dbReference type="ChEBI" id="CHEBI:30616"/>
    </ligand>
</feature>
<feature type="binding site" evidence="2">
    <location>
        <position position="51"/>
    </location>
    <ligand>
        <name>ATP</name>
        <dbReference type="ChEBI" id="CHEBI:30616"/>
    </ligand>
</feature>
<feature type="modified residue" description="Phosphothreonine" evidence="1">
    <location>
        <position position="184"/>
    </location>
</feature>
<feature type="modified residue" description="Phosphotyrosine" evidence="1">
    <location>
        <position position="186"/>
    </location>
</feature>
<sequence length="501" mass="57099">MDAKKGSGEPEFFSEYGDASRYEVTEVVGKGSYGVVAAAVDTHTGGRVAIKKINDVFEHISDATRILREIKLLRLLRHPDIVEIKHIMLPPSRREFRDIYIIFELMESDLHQVIKANDDLTPEHHQFFLYQLLRGMKYIHAASVFHRDLKPKNILANADCKVKICDFGLARVSFDDTPSAIFWTDYVATRWYRAPELCGSFFSKYTPAIDIWSVGCIFAEMLMGKPLFPGKNVVHQLDLMTDLLGSPSGETISRIRNEKARRYLGNMRKKPRVPFSQKFPGADPMALHLLERLLAFDPKDRPTAAEALTDPYFTGLANSEREPIAQPISKLEFEFERRKLAKDDVRELIYREILEYHPQMMQKYLRGGDQSNFLYPSGVDRFKRQFAHLEEGVAQGDKTSPQLRQHVSLPRERVVRNGDEPDPTADYCIKLHVGEQPGHSSVTDGLNKPLLSARNFLKSESIGASQCVVIKEKREKDEESMSEYMNEAADGVPHKIAQLKT</sequence>
<gene>
    <name type="primary">MPK16</name>
    <name type="ordered locus">Os01g0643800</name>
    <name type="ordered locus">LOC_Os01g45620</name>
    <name type="ORF">P0510C12.37</name>
    <name type="ORF">P0707D10.2</name>
</gene>
<accession>Q5VP69</accession>
<accession>Q0JKX0</accession>
<dbReference type="EC" id="2.7.11.24"/>
<dbReference type="EMBL" id="AP002910">
    <property type="protein sequence ID" value="BAD67997.1"/>
    <property type="molecule type" value="Genomic_DNA"/>
</dbReference>
<dbReference type="EMBL" id="AP003725">
    <property type="protein sequence ID" value="BAD68756.1"/>
    <property type="molecule type" value="Genomic_DNA"/>
</dbReference>
<dbReference type="EMBL" id="AP008207">
    <property type="protein sequence ID" value="BAF05608.1"/>
    <property type="molecule type" value="Genomic_DNA"/>
</dbReference>
<dbReference type="EMBL" id="AP014957">
    <property type="protein sequence ID" value="BAS73384.1"/>
    <property type="molecule type" value="Genomic_DNA"/>
</dbReference>
<dbReference type="EMBL" id="AK069424">
    <property type="protein sequence ID" value="BAG91427.1"/>
    <property type="molecule type" value="mRNA"/>
</dbReference>
<dbReference type="SMR" id="Q5VP69"/>
<dbReference type="FunCoup" id="Q5VP69">
    <property type="interactions" value="136"/>
</dbReference>
<dbReference type="STRING" id="39947.Q5VP69"/>
<dbReference type="PaxDb" id="39947-Q5VP69"/>
<dbReference type="EnsemblPlants" id="Os01t0643800-01">
    <property type="protein sequence ID" value="Os01t0643800-01"/>
    <property type="gene ID" value="Os01g0643800"/>
</dbReference>
<dbReference type="Gramene" id="Os01t0643800-01">
    <property type="protein sequence ID" value="Os01t0643800-01"/>
    <property type="gene ID" value="Os01g0643800"/>
</dbReference>
<dbReference type="KEGG" id="dosa:Os01g0643800"/>
<dbReference type="eggNOG" id="KOG0660">
    <property type="taxonomic scope" value="Eukaryota"/>
</dbReference>
<dbReference type="HOGENOM" id="CLU_000288_181_5_1"/>
<dbReference type="InParanoid" id="Q5VP69"/>
<dbReference type="OMA" id="TADYCIK"/>
<dbReference type="Proteomes" id="UP000000763">
    <property type="component" value="Chromosome 1"/>
</dbReference>
<dbReference type="Proteomes" id="UP000059680">
    <property type="component" value="Chromosome 1"/>
</dbReference>
<dbReference type="GO" id="GO:0005737">
    <property type="term" value="C:cytoplasm"/>
    <property type="evidence" value="ECO:0000318"/>
    <property type="project" value="GO_Central"/>
</dbReference>
<dbReference type="GO" id="GO:0005634">
    <property type="term" value="C:nucleus"/>
    <property type="evidence" value="ECO:0000318"/>
    <property type="project" value="GO_Central"/>
</dbReference>
<dbReference type="GO" id="GO:0005524">
    <property type="term" value="F:ATP binding"/>
    <property type="evidence" value="ECO:0007669"/>
    <property type="project" value="UniProtKB-KW"/>
</dbReference>
<dbReference type="GO" id="GO:0004707">
    <property type="term" value="F:MAP kinase activity"/>
    <property type="evidence" value="ECO:0007669"/>
    <property type="project" value="UniProtKB-EC"/>
</dbReference>
<dbReference type="GO" id="GO:0106310">
    <property type="term" value="F:protein serine kinase activity"/>
    <property type="evidence" value="ECO:0007669"/>
    <property type="project" value="RHEA"/>
</dbReference>
<dbReference type="GO" id="GO:0004674">
    <property type="term" value="F:protein serine/threonine kinase activity"/>
    <property type="evidence" value="ECO:0000318"/>
    <property type="project" value="GO_Central"/>
</dbReference>
<dbReference type="GO" id="GO:0035556">
    <property type="term" value="P:intracellular signal transduction"/>
    <property type="evidence" value="ECO:0000318"/>
    <property type="project" value="GO_Central"/>
</dbReference>
<dbReference type="CDD" id="cd07859">
    <property type="entry name" value="STKc_TDY_MAPK"/>
    <property type="match status" value="1"/>
</dbReference>
<dbReference type="FunFam" id="1.10.510.10:FF:000017">
    <property type="entry name" value="Mitogen-activated protein kinase"/>
    <property type="match status" value="1"/>
</dbReference>
<dbReference type="FunFam" id="3.30.200.20:FF:000046">
    <property type="entry name" value="Mitogen-activated protein kinase"/>
    <property type="match status" value="1"/>
</dbReference>
<dbReference type="FunFam" id="3.30.200.20:FF:000578">
    <property type="entry name" value="Mitogen-activated protein kinase"/>
    <property type="match status" value="1"/>
</dbReference>
<dbReference type="Gene3D" id="3.30.200.20">
    <property type="entry name" value="Phosphorylase Kinase, domain 1"/>
    <property type="match status" value="1"/>
</dbReference>
<dbReference type="Gene3D" id="1.10.510.10">
    <property type="entry name" value="Transferase(Phosphotransferase) domain 1"/>
    <property type="match status" value="1"/>
</dbReference>
<dbReference type="InterPro" id="IPR011009">
    <property type="entry name" value="Kinase-like_dom_sf"/>
</dbReference>
<dbReference type="InterPro" id="IPR050117">
    <property type="entry name" value="MAP_kinase"/>
</dbReference>
<dbReference type="InterPro" id="IPR003527">
    <property type="entry name" value="MAP_kinase_CS"/>
</dbReference>
<dbReference type="InterPro" id="IPR000719">
    <property type="entry name" value="Prot_kinase_dom"/>
</dbReference>
<dbReference type="InterPro" id="IPR017441">
    <property type="entry name" value="Protein_kinase_ATP_BS"/>
</dbReference>
<dbReference type="PANTHER" id="PTHR24055">
    <property type="entry name" value="MITOGEN-ACTIVATED PROTEIN KINASE"/>
    <property type="match status" value="1"/>
</dbReference>
<dbReference type="Pfam" id="PF00069">
    <property type="entry name" value="Pkinase"/>
    <property type="match status" value="1"/>
</dbReference>
<dbReference type="SMART" id="SM00220">
    <property type="entry name" value="S_TKc"/>
    <property type="match status" value="1"/>
</dbReference>
<dbReference type="SUPFAM" id="SSF56112">
    <property type="entry name" value="Protein kinase-like (PK-like)"/>
    <property type="match status" value="1"/>
</dbReference>
<dbReference type="PROSITE" id="PS01351">
    <property type="entry name" value="MAPK"/>
    <property type="match status" value="1"/>
</dbReference>
<dbReference type="PROSITE" id="PS00107">
    <property type="entry name" value="PROTEIN_KINASE_ATP"/>
    <property type="match status" value="1"/>
</dbReference>
<dbReference type="PROSITE" id="PS50011">
    <property type="entry name" value="PROTEIN_KINASE_DOM"/>
    <property type="match status" value="1"/>
</dbReference>
<comment type="catalytic activity">
    <reaction>
        <text>L-seryl-[protein] + ATP = O-phospho-L-seryl-[protein] + ADP + H(+)</text>
        <dbReference type="Rhea" id="RHEA:17989"/>
        <dbReference type="Rhea" id="RHEA-COMP:9863"/>
        <dbReference type="Rhea" id="RHEA-COMP:11604"/>
        <dbReference type="ChEBI" id="CHEBI:15378"/>
        <dbReference type="ChEBI" id="CHEBI:29999"/>
        <dbReference type="ChEBI" id="CHEBI:30616"/>
        <dbReference type="ChEBI" id="CHEBI:83421"/>
        <dbReference type="ChEBI" id="CHEBI:456216"/>
        <dbReference type="EC" id="2.7.11.24"/>
    </reaction>
</comment>
<comment type="catalytic activity">
    <reaction>
        <text>L-threonyl-[protein] + ATP = O-phospho-L-threonyl-[protein] + ADP + H(+)</text>
        <dbReference type="Rhea" id="RHEA:46608"/>
        <dbReference type="Rhea" id="RHEA-COMP:11060"/>
        <dbReference type="Rhea" id="RHEA-COMP:11605"/>
        <dbReference type="ChEBI" id="CHEBI:15378"/>
        <dbReference type="ChEBI" id="CHEBI:30013"/>
        <dbReference type="ChEBI" id="CHEBI:30616"/>
        <dbReference type="ChEBI" id="CHEBI:61977"/>
        <dbReference type="ChEBI" id="CHEBI:456216"/>
        <dbReference type="EC" id="2.7.11.24"/>
    </reaction>
</comment>
<comment type="activity regulation">
    <text evidence="1">Activated by threonine and tyrosine phosphorylation.</text>
</comment>
<comment type="domain">
    <text>The TXY motif contains the threonine and tyrosine residues whose phosphorylation activates the MAP kinases.</text>
</comment>
<comment type="PTM">
    <text evidence="1">Dually phosphorylated on Thr-184 and Tyr-186, which activates the enzyme.</text>
</comment>
<comment type="similarity">
    <text evidence="4">Belongs to the protein kinase superfamily. CMGC Ser/Thr protein kinase family. MAP kinase subfamily.</text>
</comment>
<protein>
    <recommendedName>
        <fullName>Mitogen-activated protein kinase 16</fullName>
        <shortName>MAP kinase 16</shortName>
        <ecNumber>2.7.11.24</ecNumber>
    </recommendedName>
</protein>
<organism>
    <name type="scientific">Oryza sativa subsp. japonica</name>
    <name type="common">Rice</name>
    <dbReference type="NCBI Taxonomy" id="39947"/>
    <lineage>
        <taxon>Eukaryota</taxon>
        <taxon>Viridiplantae</taxon>
        <taxon>Streptophyta</taxon>
        <taxon>Embryophyta</taxon>
        <taxon>Tracheophyta</taxon>
        <taxon>Spermatophyta</taxon>
        <taxon>Magnoliopsida</taxon>
        <taxon>Liliopsida</taxon>
        <taxon>Poales</taxon>
        <taxon>Poaceae</taxon>
        <taxon>BOP clade</taxon>
        <taxon>Oryzoideae</taxon>
        <taxon>Oryzeae</taxon>
        <taxon>Oryzinae</taxon>
        <taxon>Oryza</taxon>
        <taxon>Oryza sativa</taxon>
    </lineage>
</organism>
<evidence type="ECO:0000250" key="1"/>
<evidence type="ECO:0000255" key="2">
    <source>
        <dbReference type="PROSITE-ProRule" id="PRU00159"/>
    </source>
</evidence>
<evidence type="ECO:0000256" key="3">
    <source>
        <dbReference type="SAM" id="MobiDB-lite"/>
    </source>
</evidence>
<evidence type="ECO:0000305" key="4"/>